<protein>
    <recommendedName>
        <fullName>Signal peptidase complex catalytic subunit sec11</fullName>
        <ecNumber evidence="1">3.4.21.89</ecNumber>
    </recommendedName>
    <alternativeName>
        <fullName>Signal peptidase I</fullName>
    </alternativeName>
</protein>
<gene>
    <name type="primary">sec11</name>
    <name type="ORF">NCU04519</name>
</gene>
<name>SEC11_NEUCR</name>
<proteinExistence type="inferred from homology"/>
<evidence type="ECO:0000250" key="1">
    <source>
        <dbReference type="UniProtKB" id="P15367"/>
    </source>
</evidence>
<evidence type="ECO:0000250" key="2">
    <source>
        <dbReference type="UniProtKB" id="P67812"/>
    </source>
</evidence>
<evidence type="ECO:0000255" key="3"/>
<evidence type="ECO:0000305" key="4"/>
<sequence>MLSGLANPRQAAVQLMNFGLILSTAFMMWKGISVITDSPSPIVVVLSGSMEPAFQRGDLLFLWNRNVLAETSVGEIVVYNVKGKDIPIVHRIVRKFGKGPEAKLLTKGDNNVSDDTELYASGQDYLVRNDIIGSVFAYIPFVGYVTILLSEHPWLKTVMLGLMGLVVVLQRE</sequence>
<accession>Q7RY44</accession>
<organism>
    <name type="scientific">Neurospora crassa (strain ATCC 24698 / 74-OR23-1A / CBS 708.71 / DSM 1257 / FGSC 987)</name>
    <dbReference type="NCBI Taxonomy" id="367110"/>
    <lineage>
        <taxon>Eukaryota</taxon>
        <taxon>Fungi</taxon>
        <taxon>Dikarya</taxon>
        <taxon>Ascomycota</taxon>
        <taxon>Pezizomycotina</taxon>
        <taxon>Sordariomycetes</taxon>
        <taxon>Sordariomycetidae</taxon>
        <taxon>Sordariales</taxon>
        <taxon>Sordariaceae</taxon>
        <taxon>Neurospora</taxon>
    </lineage>
</organism>
<reference key="1">
    <citation type="journal article" date="2003" name="Nature">
        <title>The genome sequence of the filamentous fungus Neurospora crassa.</title>
        <authorList>
            <person name="Galagan J.E."/>
            <person name="Calvo S.E."/>
            <person name="Borkovich K.A."/>
            <person name="Selker E.U."/>
            <person name="Read N.D."/>
            <person name="Jaffe D.B."/>
            <person name="FitzHugh W."/>
            <person name="Ma L.-J."/>
            <person name="Smirnov S."/>
            <person name="Purcell S."/>
            <person name="Rehman B."/>
            <person name="Elkins T."/>
            <person name="Engels R."/>
            <person name="Wang S."/>
            <person name="Nielsen C.B."/>
            <person name="Butler J."/>
            <person name="Endrizzi M."/>
            <person name="Qui D."/>
            <person name="Ianakiev P."/>
            <person name="Bell-Pedersen D."/>
            <person name="Nelson M.A."/>
            <person name="Werner-Washburne M."/>
            <person name="Selitrennikoff C.P."/>
            <person name="Kinsey J.A."/>
            <person name="Braun E.L."/>
            <person name="Zelter A."/>
            <person name="Schulte U."/>
            <person name="Kothe G.O."/>
            <person name="Jedd G."/>
            <person name="Mewes H.-W."/>
            <person name="Staben C."/>
            <person name="Marcotte E."/>
            <person name="Greenberg D."/>
            <person name="Roy A."/>
            <person name="Foley K."/>
            <person name="Naylor J."/>
            <person name="Stange-Thomann N."/>
            <person name="Barrett R."/>
            <person name="Gnerre S."/>
            <person name="Kamal M."/>
            <person name="Kamvysselis M."/>
            <person name="Mauceli E.W."/>
            <person name="Bielke C."/>
            <person name="Rudd S."/>
            <person name="Frishman D."/>
            <person name="Krystofova S."/>
            <person name="Rasmussen C."/>
            <person name="Metzenberg R.L."/>
            <person name="Perkins D.D."/>
            <person name="Kroken S."/>
            <person name="Cogoni C."/>
            <person name="Macino G."/>
            <person name="Catcheside D.E.A."/>
            <person name="Li W."/>
            <person name="Pratt R.J."/>
            <person name="Osmani S.A."/>
            <person name="DeSouza C.P.C."/>
            <person name="Glass N.L."/>
            <person name="Orbach M.J."/>
            <person name="Berglund J.A."/>
            <person name="Voelker R."/>
            <person name="Yarden O."/>
            <person name="Plamann M."/>
            <person name="Seiler S."/>
            <person name="Dunlap J.C."/>
            <person name="Radford A."/>
            <person name="Aramayo R."/>
            <person name="Natvig D.O."/>
            <person name="Alex L.A."/>
            <person name="Mannhaupt G."/>
            <person name="Ebbole D.J."/>
            <person name="Freitag M."/>
            <person name="Paulsen I."/>
            <person name="Sachs M.S."/>
            <person name="Lander E.S."/>
            <person name="Nusbaum C."/>
            <person name="Birren B.W."/>
        </authorList>
    </citation>
    <scope>NUCLEOTIDE SEQUENCE [LARGE SCALE GENOMIC DNA]</scope>
    <source>
        <strain>ATCC 24698 / 74-OR23-1A / CBS 708.71 / DSM 1257 / FGSC 987</strain>
    </source>
</reference>
<comment type="function">
    <text evidence="1 2">Catalytic component of the signal peptidase complex (SPC) which catalyzes the cleavage of N-terminal signal sequences from nascent proteins as they are translocated into the lumen of the endoplasmic reticulum (By similarity). Specifically cleaves N-terminal signal peptides that contain a hydrophobic alpha-helix (h-region) shorter than 18-20 amino acids (By similarity).</text>
</comment>
<comment type="catalytic activity">
    <reaction evidence="1">
        <text>Cleavage of hydrophobic, N-terminal signal or leader sequences from secreted and periplasmic proteins.</text>
        <dbReference type="EC" id="3.4.21.89"/>
    </reaction>
</comment>
<comment type="subunit">
    <text evidence="1 2">Component of the signal peptidase complex (SPC) composed of a catalytic subunit SEC11 and three accessory subunits SPC1, SPC2 and SPC3 (By similarity). The complex induces a local thinning of the ER membrane which is used to measure the length of the signal peptide (SP) h-region of protein substrates. This ensures the selectivity of the complex towards h-regions shorter than 18-20 amino acids (By similarity). SPC associates with the translocon complex (By similarity).</text>
</comment>
<comment type="subcellular location">
    <subcellularLocation>
        <location evidence="1">Endoplasmic reticulum membrane</location>
        <topology evidence="1">Single-pass type II membrane protein</topology>
    </subcellularLocation>
</comment>
<comment type="domain">
    <text evidence="2">The C-terminal short (CTS) helix is essential for catalytic activity. It may be accommodated as a transmembrane helix in the thinned membrane environment of the complex, similarly to the signal peptide in the complex substrates.</text>
</comment>
<comment type="similarity">
    <text evidence="4">Belongs to the peptidase S26B family.</text>
</comment>
<keyword id="KW-0256">Endoplasmic reticulum</keyword>
<keyword id="KW-0325">Glycoprotein</keyword>
<keyword id="KW-0378">Hydrolase</keyword>
<keyword id="KW-0472">Membrane</keyword>
<keyword id="KW-0645">Protease</keyword>
<keyword id="KW-1185">Reference proteome</keyword>
<keyword id="KW-0735">Signal-anchor</keyword>
<keyword id="KW-0812">Transmembrane</keyword>
<keyword id="KW-1133">Transmembrane helix</keyword>
<dbReference type="EC" id="3.4.21.89" evidence="1"/>
<dbReference type="EMBL" id="CM002239">
    <property type="protein sequence ID" value="EAA27694.1"/>
    <property type="molecule type" value="Genomic_DNA"/>
</dbReference>
<dbReference type="RefSeq" id="XP_956930.1">
    <property type="nucleotide sequence ID" value="XM_951837.2"/>
</dbReference>
<dbReference type="SMR" id="Q7RY44"/>
<dbReference type="FunCoup" id="Q7RY44">
    <property type="interactions" value="650"/>
</dbReference>
<dbReference type="STRING" id="367110.Q7RY44"/>
<dbReference type="MEROPS" id="S26.010"/>
<dbReference type="GlyCosmos" id="Q7RY44">
    <property type="glycosylation" value="1 site, No reported glycans"/>
</dbReference>
<dbReference type="PaxDb" id="5141-EFNCRP00000005145"/>
<dbReference type="EnsemblFungi" id="EAA27694">
    <property type="protein sequence ID" value="EAA27694"/>
    <property type="gene ID" value="NCU04519"/>
</dbReference>
<dbReference type="GeneID" id="3873068"/>
<dbReference type="KEGG" id="ncr:NCU04519"/>
<dbReference type="VEuPathDB" id="FungiDB:NCU04519"/>
<dbReference type="HOGENOM" id="CLU_089996_0_1_1"/>
<dbReference type="InParanoid" id="Q7RY44"/>
<dbReference type="OMA" id="ILMNEYP"/>
<dbReference type="OrthoDB" id="10257561at2759"/>
<dbReference type="Proteomes" id="UP000001805">
    <property type="component" value="Chromosome 4, Linkage Group IV"/>
</dbReference>
<dbReference type="GO" id="GO:0005787">
    <property type="term" value="C:signal peptidase complex"/>
    <property type="evidence" value="ECO:0000318"/>
    <property type="project" value="GO_Central"/>
</dbReference>
<dbReference type="GO" id="GO:0008233">
    <property type="term" value="F:peptidase activity"/>
    <property type="evidence" value="ECO:0000318"/>
    <property type="project" value="GO_Central"/>
</dbReference>
<dbReference type="GO" id="GO:0004252">
    <property type="term" value="F:serine-type endopeptidase activity"/>
    <property type="evidence" value="ECO:0007669"/>
    <property type="project" value="UniProtKB-EC"/>
</dbReference>
<dbReference type="GO" id="GO:0045047">
    <property type="term" value="P:protein targeting to ER"/>
    <property type="evidence" value="ECO:0007669"/>
    <property type="project" value="EnsemblFungi"/>
</dbReference>
<dbReference type="GO" id="GO:0006465">
    <property type="term" value="P:signal peptide processing"/>
    <property type="evidence" value="ECO:0000318"/>
    <property type="project" value="GO_Central"/>
</dbReference>
<dbReference type="CDD" id="cd06530">
    <property type="entry name" value="S26_SPase_I"/>
    <property type="match status" value="1"/>
</dbReference>
<dbReference type="Gene3D" id="2.10.109.10">
    <property type="entry name" value="Umud Fragment, subunit A"/>
    <property type="match status" value="1"/>
</dbReference>
<dbReference type="InterPro" id="IPR036286">
    <property type="entry name" value="LexA/Signal_pep-like_sf"/>
</dbReference>
<dbReference type="InterPro" id="IPR019756">
    <property type="entry name" value="Pept_S26A_signal_pept_1_Ser-AS"/>
</dbReference>
<dbReference type="InterPro" id="IPR019533">
    <property type="entry name" value="Peptidase_S26"/>
</dbReference>
<dbReference type="InterPro" id="IPR001733">
    <property type="entry name" value="Peptidase_S26B"/>
</dbReference>
<dbReference type="NCBIfam" id="TIGR02228">
    <property type="entry name" value="sigpep_I_arch"/>
    <property type="match status" value="1"/>
</dbReference>
<dbReference type="PANTHER" id="PTHR10806">
    <property type="entry name" value="SIGNAL PEPTIDASE COMPLEX CATALYTIC SUBUNIT SEC11"/>
    <property type="match status" value="1"/>
</dbReference>
<dbReference type="PANTHER" id="PTHR10806:SF6">
    <property type="entry name" value="SIGNAL PEPTIDASE COMPLEX CATALYTIC SUBUNIT SEC11"/>
    <property type="match status" value="1"/>
</dbReference>
<dbReference type="PRINTS" id="PR00728">
    <property type="entry name" value="SIGNALPTASE"/>
</dbReference>
<dbReference type="SUPFAM" id="SSF51306">
    <property type="entry name" value="LexA/Signal peptidase"/>
    <property type="match status" value="1"/>
</dbReference>
<dbReference type="PROSITE" id="PS00501">
    <property type="entry name" value="SPASE_I_1"/>
    <property type="match status" value="1"/>
</dbReference>
<feature type="chain" id="PRO_0000412344" description="Signal peptidase complex catalytic subunit sec11">
    <location>
        <begin position="1"/>
        <end position="172"/>
    </location>
</feature>
<feature type="topological domain" description="Cytoplasmic" evidence="4">
    <location>
        <begin position="1"/>
        <end position="14"/>
    </location>
</feature>
<feature type="transmembrane region" description="Helical; Signal-anchor for type II membrane protein" evidence="3">
    <location>
        <begin position="15"/>
        <end position="35"/>
    </location>
</feature>
<feature type="topological domain" description="Lumenal" evidence="4">
    <location>
        <begin position="36"/>
        <end position="172"/>
    </location>
</feature>
<feature type="region of interest" description="C-terminal short (CTS) helix" evidence="2">
    <location>
        <begin position="158"/>
        <end position="169"/>
    </location>
</feature>
<feature type="active site" description="Charge relay system" evidence="1">
    <location>
        <position position="49"/>
    </location>
</feature>
<feature type="active site" description="Charge relay system" evidence="1">
    <location>
        <position position="90"/>
    </location>
</feature>
<feature type="active site" description="Charge relay system" evidence="1">
    <location>
        <position position="115"/>
    </location>
</feature>
<feature type="glycosylation site" description="N-linked (GlcNAc...) asparagine" evidence="3">
    <location>
        <position position="111"/>
    </location>
</feature>